<evidence type="ECO:0000255" key="1">
    <source>
        <dbReference type="HAMAP-Rule" id="MF_00071"/>
    </source>
</evidence>
<name>LEPA_AROAE</name>
<reference key="1">
    <citation type="journal article" date="2005" name="Arch. Microbiol.">
        <title>The genome sequence of an anaerobic aromatic-degrading denitrifying bacterium, strain EbN1.</title>
        <authorList>
            <person name="Rabus R."/>
            <person name="Kube M."/>
            <person name="Heider J."/>
            <person name="Beck A."/>
            <person name="Heitmann K."/>
            <person name="Widdel F."/>
            <person name="Reinhardt R."/>
        </authorList>
    </citation>
    <scope>NUCLEOTIDE SEQUENCE [LARGE SCALE GENOMIC DNA]</scope>
    <source>
        <strain>DSM 19018 / LMG 30748 / EbN1</strain>
    </source>
</reference>
<sequence length="598" mass="66097">MQHIRNFSIIAHIDHGKSTLADRLIHFCGGLSDREMEAQVLDSMDLERERGITIKAQTAALHYKAKDGQVYNLNLIDTPGHVDFSYEVSRSLSACEGALLVVDASQGVEAQTVANCYTAIEQNVEVVPVLNKIDLPAADPESARKEIEDVIGVDASEAVLCSAKTGLGIEDVLETVVRRVPPPKGDPDAPLKALIIDSWFDNYVGVVMLVRVVDGVLKPKDRILLMANGAQYPCDQVGVFTPRSVARPQLSAGEVGFIIAGIKELQAAKVGDTVTLAMRPASEPLPGFKEIKPQVFAGLYPVESSEYDQLRDSLEKLRLNDASLQYEPEVSQALGFGFRCGFLGLLHMDIVQERLEREFDMNLITTAPTVVYEVVMNSGEVIRVENPAKLPDQSKIAEIREPIITATIFLPQDYVGPVITLCNLKRGAQVDMRYHGRQVQLIYDLPMNEVVMDFFDKLKSVSRGYASLDYEFKEYRAADLVKLDLLVGGEKVDALSVIVHRASAQYRGREVAAKLRGLIPRQMFDVAIQSAIGSHIVARETIKALRKNVLAKCYGGDISRKKKLLEKQKEGKKRMKQVGNVEIPQEAFLAVLRVDEGK</sequence>
<organism>
    <name type="scientific">Aromatoleum aromaticum (strain DSM 19018 / LMG 30748 / EbN1)</name>
    <name type="common">Azoarcus sp. (strain EbN1)</name>
    <dbReference type="NCBI Taxonomy" id="76114"/>
    <lineage>
        <taxon>Bacteria</taxon>
        <taxon>Pseudomonadati</taxon>
        <taxon>Pseudomonadota</taxon>
        <taxon>Betaproteobacteria</taxon>
        <taxon>Rhodocyclales</taxon>
        <taxon>Rhodocyclaceae</taxon>
        <taxon>Aromatoleum</taxon>
    </lineage>
</organism>
<comment type="function">
    <text evidence="1">Required for accurate and efficient protein synthesis under certain stress conditions. May act as a fidelity factor of the translation reaction, by catalyzing a one-codon backward translocation of tRNAs on improperly translocated ribosomes. Back-translocation proceeds from a post-translocation (POST) complex to a pre-translocation (PRE) complex, thus giving elongation factor G a second chance to translocate the tRNAs correctly. Binds to ribosomes in a GTP-dependent manner.</text>
</comment>
<comment type="catalytic activity">
    <reaction evidence="1">
        <text>GTP + H2O = GDP + phosphate + H(+)</text>
        <dbReference type="Rhea" id="RHEA:19669"/>
        <dbReference type="ChEBI" id="CHEBI:15377"/>
        <dbReference type="ChEBI" id="CHEBI:15378"/>
        <dbReference type="ChEBI" id="CHEBI:37565"/>
        <dbReference type="ChEBI" id="CHEBI:43474"/>
        <dbReference type="ChEBI" id="CHEBI:58189"/>
        <dbReference type="EC" id="3.6.5.n1"/>
    </reaction>
</comment>
<comment type="subcellular location">
    <subcellularLocation>
        <location evidence="1">Cell inner membrane</location>
        <topology evidence="1">Peripheral membrane protein</topology>
        <orientation evidence="1">Cytoplasmic side</orientation>
    </subcellularLocation>
</comment>
<comment type="similarity">
    <text evidence="1">Belongs to the TRAFAC class translation factor GTPase superfamily. Classic translation factor GTPase family. LepA subfamily.</text>
</comment>
<proteinExistence type="inferred from homology"/>
<gene>
    <name evidence="1" type="primary">lepA</name>
    <name type="ordered locus">AZOSEA31500</name>
    <name type="ORF">ebA5535</name>
</gene>
<dbReference type="EC" id="3.6.5.n1" evidence="1"/>
<dbReference type="EMBL" id="CR555306">
    <property type="protein sequence ID" value="CAI09275.1"/>
    <property type="molecule type" value="Genomic_DNA"/>
</dbReference>
<dbReference type="RefSeq" id="WP_011238945.1">
    <property type="nucleotide sequence ID" value="NC_006513.1"/>
</dbReference>
<dbReference type="SMR" id="Q5P089"/>
<dbReference type="STRING" id="76114.ebA5535"/>
<dbReference type="KEGG" id="eba:ebA5535"/>
<dbReference type="eggNOG" id="COG0481">
    <property type="taxonomic scope" value="Bacteria"/>
</dbReference>
<dbReference type="HOGENOM" id="CLU_009995_3_3_4"/>
<dbReference type="OrthoDB" id="9801472at2"/>
<dbReference type="Proteomes" id="UP000006552">
    <property type="component" value="Chromosome"/>
</dbReference>
<dbReference type="GO" id="GO:0005886">
    <property type="term" value="C:plasma membrane"/>
    <property type="evidence" value="ECO:0007669"/>
    <property type="project" value="UniProtKB-SubCell"/>
</dbReference>
<dbReference type="GO" id="GO:0005525">
    <property type="term" value="F:GTP binding"/>
    <property type="evidence" value="ECO:0007669"/>
    <property type="project" value="UniProtKB-UniRule"/>
</dbReference>
<dbReference type="GO" id="GO:0003924">
    <property type="term" value="F:GTPase activity"/>
    <property type="evidence" value="ECO:0007669"/>
    <property type="project" value="UniProtKB-UniRule"/>
</dbReference>
<dbReference type="GO" id="GO:0097216">
    <property type="term" value="F:guanosine tetraphosphate binding"/>
    <property type="evidence" value="ECO:0007669"/>
    <property type="project" value="UniProtKB-ARBA"/>
</dbReference>
<dbReference type="GO" id="GO:0043022">
    <property type="term" value="F:ribosome binding"/>
    <property type="evidence" value="ECO:0007669"/>
    <property type="project" value="UniProtKB-UniRule"/>
</dbReference>
<dbReference type="GO" id="GO:0003746">
    <property type="term" value="F:translation elongation factor activity"/>
    <property type="evidence" value="ECO:0007669"/>
    <property type="project" value="UniProtKB-UniRule"/>
</dbReference>
<dbReference type="GO" id="GO:0045727">
    <property type="term" value="P:positive regulation of translation"/>
    <property type="evidence" value="ECO:0007669"/>
    <property type="project" value="UniProtKB-UniRule"/>
</dbReference>
<dbReference type="CDD" id="cd16260">
    <property type="entry name" value="EF4_III"/>
    <property type="match status" value="1"/>
</dbReference>
<dbReference type="CDD" id="cd01890">
    <property type="entry name" value="LepA"/>
    <property type="match status" value="1"/>
</dbReference>
<dbReference type="CDD" id="cd03709">
    <property type="entry name" value="lepA_C"/>
    <property type="match status" value="1"/>
</dbReference>
<dbReference type="FunFam" id="3.40.50.300:FF:000078">
    <property type="entry name" value="Elongation factor 4"/>
    <property type="match status" value="1"/>
</dbReference>
<dbReference type="FunFam" id="2.40.30.10:FF:000015">
    <property type="entry name" value="Translation factor GUF1, mitochondrial"/>
    <property type="match status" value="1"/>
</dbReference>
<dbReference type="FunFam" id="3.30.70.240:FF:000007">
    <property type="entry name" value="Translation factor GUF1, mitochondrial"/>
    <property type="match status" value="1"/>
</dbReference>
<dbReference type="FunFam" id="3.30.70.2570:FF:000001">
    <property type="entry name" value="Translation factor GUF1, mitochondrial"/>
    <property type="match status" value="1"/>
</dbReference>
<dbReference type="FunFam" id="3.30.70.870:FF:000004">
    <property type="entry name" value="Translation factor GUF1, mitochondrial"/>
    <property type="match status" value="1"/>
</dbReference>
<dbReference type="Gene3D" id="3.30.70.240">
    <property type="match status" value="1"/>
</dbReference>
<dbReference type="Gene3D" id="3.30.70.2570">
    <property type="entry name" value="Elongation factor 4, C-terminal domain"/>
    <property type="match status" value="1"/>
</dbReference>
<dbReference type="Gene3D" id="3.30.70.870">
    <property type="entry name" value="Elongation Factor G (Translational Gtpase), domain 3"/>
    <property type="match status" value="1"/>
</dbReference>
<dbReference type="Gene3D" id="3.40.50.300">
    <property type="entry name" value="P-loop containing nucleotide triphosphate hydrolases"/>
    <property type="match status" value="1"/>
</dbReference>
<dbReference type="Gene3D" id="2.40.30.10">
    <property type="entry name" value="Translation factors"/>
    <property type="match status" value="1"/>
</dbReference>
<dbReference type="HAMAP" id="MF_00071">
    <property type="entry name" value="LepA"/>
    <property type="match status" value="1"/>
</dbReference>
<dbReference type="InterPro" id="IPR006297">
    <property type="entry name" value="EF-4"/>
</dbReference>
<dbReference type="InterPro" id="IPR035647">
    <property type="entry name" value="EFG_III/V"/>
</dbReference>
<dbReference type="InterPro" id="IPR000640">
    <property type="entry name" value="EFG_V-like"/>
</dbReference>
<dbReference type="InterPro" id="IPR004161">
    <property type="entry name" value="EFTu-like_2"/>
</dbReference>
<dbReference type="InterPro" id="IPR031157">
    <property type="entry name" value="G_TR_CS"/>
</dbReference>
<dbReference type="InterPro" id="IPR038363">
    <property type="entry name" value="LepA_C_sf"/>
</dbReference>
<dbReference type="InterPro" id="IPR013842">
    <property type="entry name" value="LepA_CTD"/>
</dbReference>
<dbReference type="InterPro" id="IPR035654">
    <property type="entry name" value="LepA_IV"/>
</dbReference>
<dbReference type="InterPro" id="IPR027417">
    <property type="entry name" value="P-loop_NTPase"/>
</dbReference>
<dbReference type="InterPro" id="IPR005225">
    <property type="entry name" value="Small_GTP-bd"/>
</dbReference>
<dbReference type="InterPro" id="IPR000795">
    <property type="entry name" value="T_Tr_GTP-bd_dom"/>
</dbReference>
<dbReference type="InterPro" id="IPR009000">
    <property type="entry name" value="Transl_B-barrel_sf"/>
</dbReference>
<dbReference type="NCBIfam" id="TIGR01393">
    <property type="entry name" value="lepA"/>
    <property type="match status" value="1"/>
</dbReference>
<dbReference type="NCBIfam" id="TIGR00231">
    <property type="entry name" value="small_GTP"/>
    <property type="match status" value="1"/>
</dbReference>
<dbReference type="PANTHER" id="PTHR43512:SF4">
    <property type="entry name" value="TRANSLATION FACTOR GUF1 HOMOLOG, CHLOROPLASTIC"/>
    <property type="match status" value="1"/>
</dbReference>
<dbReference type="PANTHER" id="PTHR43512">
    <property type="entry name" value="TRANSLATION FACTOR GUF1-RELATED"/>
    <property type="match status" value="1"/>
</dbReference>
<dbReference type="Pfam" id="PF00679">
    <property type="entry name" value="EFG_C"/>
    <property type="match status" value="1"/>
</dbReference>
<dbReference type="Pfam" id="PF00009">
    <property type="entry name" value="GTP_EFTU"/>
    <property type="match status" value="1"/>
</dbReference>
<dbReference type="Pfam" id="PF03144">
    <property type="entry name" value="GTP_EFTU_D2"/>
    <property type="match status" value="1"/>
</dbReference>
<dbReference type="Pfam" id="PF06421">
    <property type="entry name" value="LepA_C"/>
    <property type="match status" value="1"/>
</dbReference>
<dbReference type="PRINTS" id="PR00315">
    <property type="entry name" value="ELONGATNFCT"/>
</dbReference>
<dbReference type="SUPFAM" id="SSF54980">
    <property type="entry name" value="EF-G C-terminal domain-like"/>
    <property type="match status" value="2"/>
</dbReference>
<dbReference type="SUPFAM" id="SSF52540">
    <property type="entry name" value="P-loop containing nucleoside triphosphate hydrolases"/>
    <property type="match status" value="1"/>
</dbReference>
<dbReference type="SUPFAM" id="SSF50447">
    <property type="entry name" value="Translation proteins"/>
    <property type="match status" value="1"/>
</dbReference>
<dbReference type="PROSITE" id="PS00301">
    <property type="entry name" value="G_TR_1"/>
    <property type="match status" value="1"/>
</dbReference>
<dbReference type="PROSITE" id="PS51722">
    <property type="entry name" value="G_TR_2"/>
    <property type="match status" value="1"/>
</dbReference>
<protein>
    <recommendedName>
        <fullName evidence="1">Elongation factor 4</fullName>
        <shortName evidence="1">EF-4</shortName>
        <ecNumber evidence="1">3.6.5.n1</ecNumber>
    </recommendedName>
    <alternativeName>
        <fullName evidence="1">Ribosomal back-translocase LepA</fullName>
    </alternativeName>
</protein>
<accession>Q5P089</accession>
<feature type="chain" id="PRO_0000224742" description="Elongation factor 4">
    <location>
        <begin position="1"/>
        <end position="598"/>
    </location>
</feature>
<feature type="domain" description="tr-type G">
    <location>
        <begin position="2"/>
        <end position="184"/>
    </location>
</feature>
<feature type="binding site" evidence="1">
    <location>
        <begin position="14"/>
        <end position="19"/>
    </location>
    <ligand>
        <name>GTP</name>
        <dbReference type="ChEBI" id="CHEBI:37565"/>
    </ligand>
</feature>
<feature type="binding site" evidence="1">
    <location>
        <begin position="131"/>
        <end position="134"/>
    </location>
    <ligand>
        <name>GTP</name>
        <dbReference type="ChEBI" id="CHEBI:37565"/>
    </ligand>
</feature>
<keyword id="KW-0997">Cell inner membrane</keyword>
<keyword id="KW-1003">Cell membrane</keyword>
<keyword id="KW-0342">GTP-binding</keyword>
<keyword id="KW-0378">Hydrolase</keyword>
<keyword id="KW-0472">Membrane</keyword>
<keyword id="KW-0547">Nucleotide-binding</keyword>
<keyword id="KW-0648">Protein biosynthesis</keyword>
<keyword id="KW-1185">Reference proteome</keyword>